<protein>
    <recommendedName>
        <fullName>Leucine-rich repeat-containing protein 9</fullName>
    </recommendedName>
</protein>
<proteinExistence type="evidence at protein level"/>
<dbReference type="EMBL" id="AK019545">
    <property type="protein sequence ID" value="BAB31790.1"/>
    <property type="status" value="ALT_FRAME"/>
    <property type="molecule type" value="mRNA"/>
</dbReference>
<dbReference type="EMBL" id="AK029802">
    <property type="protein sequence ID" value="BAC26622.1"/>
    <property type="status" value="ALT_FRAME"/>
    <property type="molecule type" value="mRNA"/>
</dbReference>
<dbReference type="EMBL" id="AK039037">
    <property type="protein sequence ID" value="BAC30215.2"/>
    <property type="molecule type" value="mRNA"/>
</dbReference>
<dbReference type="CCDS" id="CCDS49085.1">
    <molecule id="Q8CDN9-1"/>
</dbReference>
<dbReference type="RefSeq" id="NP_001136200.1">
    <molecule id="Q8CDN9-1"/>
    <property type="nucleotide sequence ID" value="NM_001142728.1"/>
</dbReference>
<dbReference type="RefSeq" id="NP_001136201.1">
    <property type="nucleotide sequence ID" value="NM_001142729.1"/>
</dbReference>
<dbReference type="RefSeq" id="NP_084346.2">
    <property type="nucleotide sequence ID" value="NM_030070.3"/>
</dbReference>
<dbReference type="RefSeq" id="XP_017170735.1">
    <molecule id="Q8CDN9-1"/>
    <property type="nucleotide sequence ID" value="XM_017315246.3"/>
</dbReference>
<dbReference type="SMR" id="Q8CDN9"/>
<dbReference type="FunCoup" id="Q8CDN9">
    <property type="interactions" value="369"/>
</dbReference>
<dbReference type="STRING" id="10090.ENSMUSP00000124394"/>
<dbReference type="iPTMnet" id="Q8CDN9"/>
<dbReference type="PhosphoSitePlus" id="Q8CDN9"/>
<dbReference type="jPOST" id="Q8CDN9"/>
<dbReference type="PaxDb" id="10090-ENSMUSP00000124394"/>
<dbReference type="ProteomicsDB" id="292114">
    <molecule id="Q8CDN9-1"/>
</dbReference>
<dbReference type="ProteomicsDB" id="292115">
    <molecule id="Q8CDN9-2"/>
</dbReference>
<dbReference type="Antibodypedia" id="72204">
    <property type="antibodies" value="9 antibodies from 4 providers"/>
</dbReference>
<dbReference type="DNASU" id="78257"/>
<dbReference type="Ensembl" id="ENSMUST00000162159.8">
    <molecule id="Q8CDN9-1"/>
    <property type="protein sequence ID" value="ENSMUSP00000124394.2"/>
    <property type="gene ID" value="ENSMUSG00000021090.17"/>
</dbReference>
<dbReference type="GeneID" id="78257"/>
<dbReference type="KEGG" id="mmu:78257"/>
<dbReference type="UCSC" id="uc007nvn.2">
    <molecule id="Q8CDN9-1"/>
    <property type="organism name" value="mouse"/>
</dbReference>
<dbReference type="AGR" id="MGI:1925507"/>
<dbReference type="CTD" id="341883"/>
<dbReference type="MGI" id="MGI:1925507">
    <property type="gene designation" value="Lrrc9"/>
</dbReference>
<dbReference type="VEuPathDB" id="HostDB:ENSMUSG00000021090"/>
<dbReference type="eggNOG" id="KOG0531">
    <property type="taxonomic scope" value="Eukaryota"/>
</dbReference>
<dbReference type="GeneTree" id="ENSGT00940000158583"/>
<dbReference type="HOGENOM" id="CLU_002627_0_0_1"/>
<dbReference type="InParanoid" id="Q8CDN9"/>
<dbReference type="OMA" id="HTAGNVR"/>
<dbReference type="OrthoDB" id="1517790at2759"/>
<dbReference type="PhylomeDB" id="Q8CDN9"/>
<dbReference type="TreeFam" id="TF329042"/>
<dbReference type="BioGRID-ORCS" id="78257">
    <property type="hits" value="2 hits in 77 CRISPR screens"/>
</dbReference>
<dbReference type="ChiTaRS" id="Lrrc9">
    <property type="organism name" value="mouse"/>
</dbReference>
<dbReference type="PRO" id="PR:Q8CDN9"/>
<dbReference type="Proteomes" id="UP000000589">
    <property type="component" value="Chromosome 12"/>
</dbReference>
<dbReference type="RNAct" id="Q8CDN9">
    <property type="molecule type" value="protein"/>
</dbReference>
<dbReference type="Bgee" id="ENSMUSG00000021090">
    <property type="expression patterns" value="Expressed in spermatid and 36 other cell types or tissues"/>
</dbReference>
<dbReference type="ExpressionAtlas" id="Q8CDN9">
    <property type="expression patterns" value="baseline and differential"/>
</dbReference>
<dbReference type="GO" id="GO:0005737">
    <property type="term" value="C:cytoplasm"/>
    <property type="evidence" value="ECO:0000250"/>
    <property type="project" value="UniProtKB"/>
</dbReference>
<dbReference type="Gene3D" id="3.80.10.10">
    <property type="entry name" value="Ribonuclease Inhibitor"/>
    <property type="match status" value="7"/>
</dbReference>
<dbReference type="InterPro" id="IPR001611">
    <property type="entry name" value="Leu-rich_rpt"/>
</dbReference>
<dbReference type="InterPro" id="IPR025875">
    <property type="entry name" value="Leu-rich_rpt_4"/>
</dbReference>
<dbReference type="InterPro" id="IPR003591">
    <property type="entry name" value="Leu-rich_rpt_typical-subtyp"/>
</dbReference>
<dbReference type="InterPro" id="IPR032675">
    <property type="entry name" value="LRR_dom_sf"/>
</dbReference>
<dbReference type="InterPro" id="IPR050836">
    <property type="entry name" value="SDS22/Internalin_LRR"/>
</dbReference>
<dbReference type="InterPro" id="IPR003603">
    <property type="entry name" value="U2A'_phosphoprotein32A_C"/>
</dbReference>
<dbReference type="PANTHER" id="PTHR46652">
    <property type="entry name" value="LEUCINE-RICH REPEAT AND IQ DOMAIN-CONTAINING PROTEIN 1-RELATED"/>
    <property type="match status" value="1"/>
</dbReference>
<dbReference type="PANTHER" id="PTHR46652:SF3">
    <property type="entry name" value="LEUCINE-RICH REPEAT-CONTAINING PROTEIN 9"/>
    <property type="match status" value="1"/>
</dbReference>
<dbReference type="Pfam" id="PF12799">
    <property type="entry name" value="LRR_4"/>
    <property type="match status" value="1"/>
</dbReference>
<dbReference type="Pfam" id="PF13855">
    <property type="entry name" value="LRR_8"/>
    <property type="match status" value="1"/>
</dbReference>
<dbReference type="Pfam" id="PF14580">
    <property type="entry name" value="LRR_9"/>
    <property type="match status" value="2"/>
</dbReference>
<dbReference type="SMART" id="SM00364">
    <property type="entry name" value="LRR_BAC"/>
    <property type="match status" value="5"/>
</dbReference>
<dbReference type="SMART" id="SM00365">
    <property type="entry name" value="LRR_SD22"/>
    <property type="match status" value="16"/>
</dbReference>
<dbReference type="SMART" id="SM00369">
    <property type="entry name" value="LRR_TYP"/>
    <property type="match status" value="12"/>
</dbReference>
<dbReference type="SMART" id="SM00446">
    <property type="entry name" value="LRRcap"/>
    <property type="match status" value="3"/>
</dbReference>
<dbReference type="SUPFAM" id="SSF52058">
    <property type="entry name" value="L domain-like"/>
    <property type="match status" value="1"/>
</dbReference>
<dbReference type="SUPFAM" id="SSF52075">
    <property type="entry name" value="Outer arm dynein light chain 1"/>
    <property type="match status" value="2"/>
</dbReference>
<dbReference type="PROSITE" id="PS51450">
    <property type="entry name" value="LRR"/>
    <property type="match status" value="25"/>
</dbReference>
<keyword id="KW-0025">Alternative splicing</keyword>
<keyword id="KW-0433">Leucine-rich repeat</keyword>
<keyword id="KW-0597">Phosphoprotein</keyword>
<keyword id="KW-1185">Reference proteome</keyword>
<keyword id="KW-0677">Repeat</keyword>
<reference key="1">
    <citation type="journal article" date="2005" name="Science">
        <title>The transcriptional landscape of the mammalian genome.</title>
        <authorList>
            <person name="Carninci P."/>
            <person name="Kasukawa T."/>
            <person name="Katayama S."/>
            <person name="Gough J."/>
            <person name="Frith M.C."/>
            <person name="Maeda N."/>
            <person name="Oyama R."/>
            <person name="Ravasi T."/>
            <person name="Lenhard B."/>
            <person name="Wells C."/>
            <person name="Kodzius R."/>
            <person name="Shimokawa K."/>
            <person name="Bajic V.B."/>
            <person name="Brenner S.E."/>
            <person name="Batalov S."/>
            <person name="Forrest A.R."/>
            <person name="Zavolan M."/>
            <person name="Davis M.J."/>
            <person name="Wilming L.G."/>
            <person name="Aidinis V."/>
            <person name="Allen J.E."/>
            <person name="Ambesi-Impiombato A."/>
            <person name="Apweiler R."/>
            <person name="Aturaliya R.N."/>
            <person name="Bailey T.L."/>
            <person name="Bansal M."/>
            <person name="Baxter L."/>
            <person name="Beisel K.W."/>
            <person name="Bersano T."/>
            <person name="Bono H."/>
            <person name="Chalk A.M."/>
            <person name="Chiu K.P."/>
            <person name="Choudhary V."/>
            <person name="Christoffels A."/>
            <person name="Clutterbuck D.R."/>
            <person name="Crowe M.L."/>
            <person name="Dalla E."/>
            <person name="Dalrymple B.P."/>
            <person name="de Bono B."/>
            <person name="Della Gatta G."/>
            <person name="di Bernardo D."/>
            <person name="Down T."/>
            <person name="Engstrom P."/>
            <person name="Fagiolini M."/>
            <person name="Faulkner G."/>
            <person name="Fletcher C.F."/>
            <person name="Fukushima T."/>
            <person name="Furuno M."/>
            <person name="Futaki S."/>
            <person name="Gariboldi M."/>
            <person name="Georgii-Hemming P."/>
            <person name="Gingeras T.R."/>
            <person name="Gojobori T."/>
            <person name="Green R.E."/>
            <person name="Gustincich S."/>
            <person name="Harbers M."/>
            <person name="Hayashi Y."/>
            <person name="Hensch T.K."/>
            <person name="Hirokawa N."/>
            <person name="Hill D."/>
            <person name="Huminiecki L."/>
            <person name="Iacono M."/>
            <person name="Ikeo K."/>
            <person name="Iwama A."/>
            <person name="Ishikawa T."/>
            <person name="Jakt M."/>
            <person name="Kanapin A."/>
            <person name="Katoh M."/>
            <person name="Kawasawa Y."/>
            <person name="Kelso J."/>
            <person name="Kitamura H."/>
            <person name="Kitano H."/>
            <person name="Kollias G."/>
            <person name="Krishnan S.P."/>
            <person name="Kruger A."/>
            <person name="Kummerfeld S.K."/>
            <person name="Kurochkin I.V."/>
            <person name="Lareau L.F."/>
            <person name="Lazarevic D."/>
            <person name="Lipovich L."/>
            <person name="Liu J."/>
            <person name="Liuni S."/>
            <person name="McWilliam S."/>
            <person name="Madan Babu M."/>
            <person name="Madera M."/>
            <person name="Marchionni L."/>
            <person name="Matsuda H."/>
            <person name="Matsuzawa S."/>
            <person name="Miki H."/>
            <person name="Mignone F."/>
            <person name="Miyake S."/>
            <person name="Morris K."/>
            <person name="Mottagui-Tabar S."/>
            <person name="Mulder N."/>
            <person name="Nakano N."/>
            <person name="Nakauchi H."/>
            <person name="Ng P."/>
            <person name="Nilsson R."/>
            <person name="Nishiguchi S."/>
            <person name="Nishikawa S."/>
            <person name="Nori F."/>
            <person name="Ohara O."/>
            <person name="Okazaki Y."/>
            <person name="Orlando V."/>
            <person name="Pang K.C."/>
            <person name="Pavan W.J."/>
            <person name="Pavesi G."/>
            <person name="Pesole G."/>
            <person name="Petrovsky N."/>
            <person name="Piazza S."/>
            <person name="Reed J."/>
            <person name="Reid J.F."/>
            <person name="Ring B.Z."/>
            <person name="Ringwald M."/>
            <person name="Rost B."/>
            <person name="Ruan Y."/>
            <person name="Salzberg S.L."/>
            <person name="Sandelin A."/>
            <person name="Schneider C."/>
            <person name="Schoenbach C."/>
            <person name="Sekiguchi K."/>
            <person name="Semple C.A."/>
            <person name="Seno S."/>
            <person name="Sessa L."/>
            <person name="Sheng Y."/>
            <person name="Shibata Y."/>
            <person name="Shimada H."/>
            <person name="Shimada K."/>
            <person name="Silva D."/>
            <person name="Sinclair B."/>
            <person name="Sperling S."/>
            <person name="Stupka E."/>
            <person name="Sugiura K."/>
            <person name="Sultana R."/>
            <person name="Takenaka Y."/>
            <person name="Taki K."/>
            <person name="Tammoja K."/>
            <person name="Tan S.L."/>
            <person name="Tang S."/>
            <person name="Taylor M.S."/>
            <person name="Tegner J."/>
            <person name="Teichmann S.A."/>
            <person name="Ueda H.R."/>
            <person name="van Nimwegen E."/>
            <person name="Verardo R."/>
            <person name="Wei C.L."/>
            <person name="Yagi K."/>
            <person name="Yamanishi H."/>
            <person name="Zabarovsky E."/>
            <person name="Zhu S."/>
            <person name="Zimmer A."/>
            <person name="Hide W."/>
            <person name="Bult C."/>
            <person name="Grimmond S.M."/>
            <person name="Teasdale R.D."/>
            <person name="Liu E.T."/>
            <person name="Brusic V."/>
            <person name="Quackenbush J."/>
            <person name="Wahlestedt C."/>
            <person name="Mattick J.S."/>
            <person name="Hume D.A."/>
            <person name="Kai C."/>
            <person name="Sasaki D."/>
            <person name="Tomaru Y."/>
            <person name="Fukuda S."/>
            <person name="Kanamori-Katayama M."/>
            <person name="Suzuki M."/>
            <person name="Aoki J."/>
            <person name="Arakawa T."/>
            <person name="Iida J."/>
            <person name="Imamura K."/>
            <person name="Itoh M."/>
            <person name="Kato T."/>
            <person name="Kawaji H."/>
            <person name="Kawagashira N."/>
            <person name="Kawashima T."/>
            <person name="Kojima M."/>
            <person name="Kondo S."/>
            <person name="Konno H."/>
            <person name="Nakano K."/>
            <person name="Ninomiya N."/>
            <person name="Nishio T."/>
            <person name="Okada M."/>
            <person name="Plessy C."/>
            <person name="Shibata K."/>
            <person name="Shiraki T."/>
            <person name="Suzuki S."/>
            <person name="Tagami M."/>
            <person name="Waki K."/>
            <person name="Watahiki A."/>
            <person name="Okamura-Oho Y."/>
            <person name="Suzuki H."/>
            <person name="Kawai J."/>
            <person name="Hayashizaki Y."/>
        </authorList>
    </citation>
    <scope>NUCLEOTIDE SEQUENCE [LARGE SCALE MRNA] (ISOFORMS 1 AND 2)</scope>
    <source>
        <strain>C57BL/6J</strain>
        <tissue>Hypothalamus</tissue>
        <tissue>Testis</tissue>
    </source>
</reference>
<reference key="2">
    <citation type="journal article" date="2005" name="Nat. Biotechnol.">
        <title>Immunoaffinity profiling of tyrosine phosphorylation in cancer cells.</title>
        <authorList>
            <person name="Rush J."/>
            <person name="Moritz A."/>
            <person name="Lee K.A."/>
            <person name="Guo A."/>
            <person name="Goss V.L."/>
            <person name="Spek E.J."/>
            <person name="Zhang H."/>
            <person name="Zha X.-M."/>
            <person name="Polakiewicz R.D."/>
            <person name="Comb M.J."/>
        </authorList>
    </citation>
    <scope>PHOSPHORYLATION [LARGE SCALE ANALYSIS] AT TYR-525</scope>
    <scope>IDENTIFICATION BY MASS SPECTROMETRY [LARGE SCALE ANALYSIS]</scope>
</reference>
<feature type="chain" id="PRO_0000337677" description="Leucine-rich repeat-containing protein 9">
    <location>
        <begin position="1"/>
        <end position="1456"/>
    </location>
</feature>
<feature type="repeat" description="LRR 1">
    <location>
        <begin position="53"/>
        <end position="78"/>
    </location>
</feature>
<feature type="repeat" description="LRR 2">
    <location>
        <begin position="97"/>
        <end position="119"/>
    </location>
</feature>
<feature type="repeat" description="LRR 3">
    <location>
        <begin position="120"/>
        <end position="141"/>
    </location>
</feature>
<feature type="repeat" description="LRR 4">
    <location>
        <begin position="142"/>
        <end position="164"/>
    </location>
</feature>
<feature type="repeat" description="LRR 5">
    <location>
        <begin position="166"/>
        <end position="188"/>
    </location>
</feature>
<feature type="repeat" description="LRR 6">
    <location>
        <begin position="190"/>
        <end position="212"/>
    </location>
</feature>
<feature type="repeat" description="LRR 7">
    <location>
        <begin position="224"/>
        <end position="248"/>
    </location>
</feature>
<feature type="repeat" description="LRR 8">
    <location>
        <begin position="264"/>
        <end position="287"/>
    </location>
</feature>
<feature type="repeat" description="LRR 9">
    <location>
        <begin position="339"/>
        <end position="362"/>
    </location>
</feature>
<feature type="repeat" description="LRR 10">
    <location>
        <begin position="661"/>
        <end position="683"/>
    </location>
</feature>
<feature type="repeat" description="LRR 11">
    <location>
        <begin position="684"/>
        <end position="705"/>
    </location>
</feature>
<feature type="repeat" description="LRR 12">
    <location>
        <begin position="706"/>
        <end position="727"/>
    </location>
</feature>
<feature type="repeat" description="LRR 13">
    <location>
        <begin position="729"/>
        <end position="748"/>
    </location>
</feature>
<feature type="repeat" description="LRR 14">
    <location>
        <begin position="749"/>
        <end position="772"/>
    </location>
</feature>
<feature type="repeat" description="LRR 15">
    <location>
        <begin position="776"/>
        <end position="802"/>
    </location>
</feature>
<feature type="repeat" description="LRR 16">
    <location>
        <begin position="806"/>
        <end position="833"/>
    </location>
</feature>
<feature type="repeat" description="LRR 17">
    <location>
        <begin position="876"/>
        <end position="898"/>
    </location>
</feature>
<feature type="repeat" description="LRR 18">
    <location>
        <begin position="899"/>
        <end position="920"/>
    </location>
</feature>
<feature type="repeat" description="LRR 19">
    <location>
        <begin position="921"/>
        <end position="942"/>
    </location>
</feature>
<feature type="repeat" description="LRR 20">
    <location>
        <begin position="943"/>
        <end position="965"/>
    </location>
</feature>
<feature type="repeat" description="LRR 21">
    <location>
        <begin position="967"/>
        <end position="991"/>
    </location>
</feature>
<feature type="repeat" description="LRR 22">
    <location>
        <begin position="993"/>
        <end position="1010"/>
    </location>
</feature>
<feature type="repeat" description="LRR 23">
    <location>
        <begin position="1013"/>
        <end position="1037"/>
    </location>
</feature>
<feature type="repeat" description="LRR 24">
    <location>
        <begin position="1082"/>
        <end position="1105"/>
    </location>
</feature>
<feature type="repeat" description="LRR 25">
    <location>
        <begin position="1106"/>
        <end position="1128"/>
    </location>
</feature>
<feature type="repeat" description="LRR 26">
    <location>
        <begin position="1129"/>
        <end position="1151"/>
    </location>
</feature>
<feature type="repeat" description="LRR 27">
    <location>
        <begin position="1191"/>
        <end position="1214"/>
    </location>
</feature>
<feature type="repeat" description="LRR 28">
    <location>
        <begin position="1215"/>
        <end position="1237"/>
    </location>
</feature>
<feature type="repeat" description="LRR 29">
    <location>
        <begin position="1238"/>
        <end position="1260"/>
    </location>
</feature>
<feature type="repeat" description="LRR 30">
    <location>
        <begin position="1262"/>
        <end position="1283"/>
    </location>
</feature>
<feature type="repeat" description="LRR 31">
    <location>
        <begin position="1284"/>
        <end position="1307"/>
    </location>
</feature>
<feature type="repeat" description="LRR 32">
    <location>
        <begin position="1309"/>
        <end position="1335"/>
    </location>
</feature>
<feature type="region of interest" description="Disordered" evidence="1">
    <location>
        <begin position="305"/>
        <end position="325"/>
    </location>
</feature>
<feature type="modified residue" description="Phosphotyrosine" evidence="4">
    <location>
        <position position="525"/>
    </location>
</feature>
<feature type="splice variant" id="VSP_033992" description="In isoform 2." evidence="2">
    <original>VLCLNYNHIESIMPRLKPQTHL</original>
    <variation>ARGCRAIFALKDISTSFNLHLH</variation>
    <location>
        <begin position="1133"/>
        <end position="1154"/>
    </location>
</feature>
<feature type="splice variant" id="VSP_033993" description="In isoform 2." evidence="2">
    <location>
        <begin position="1155"/>
        <end position="1456"/>
    </location>
</feature>
<feature type="sequence conflict" description="In Ref. 1; BAC30215." evidence="3" ref="1">
    <original>S</original>
    <variation>F</variation>
    <location>
        <position position="173"/>
    </location>
</feature>
<feature type="sequence conflict" description="In Ref. 1; BAC30215." evidence="3" ref="1">
    <original>K</original>
    <variation>R</variation>
    <location>
        <position position="293"/>
    </location>
</feature>
<feature type="sequence conflict" description="In Ref. 1; BAC30215." evidence="3" ref="1">
    <original>T</original>
    <variation>K</variation>
    <location>
        <position position="312"/>
    </location>
</feature>
<feature type="sequence conflict" description="In Ref. 1; BAC30215." evidence="3" ref="1">
    <original>V</original>
    <variation>A</variation>
    <location>
        <position position="364"/>
    </location>
</feature>
<feature type="sequence conflict" description="In Ref. 1; BAB31790." evidence="3" ref="1">
    <original>D</original>
    <variation>ES</variation>
    <location>
        <position position="458"/>
    </location>
</feature>
<comment type="alternative products">
    <event type="alternative splicing"/>
    <isoform>
        <id>Q8CDN9-1</id>
        <name>1</name>
        <sequence type="displayed"/>
    </isoform>
    <isoform>
        <id>Q8CDN9-2</id>
        <name>2</name>
        <sequence type="described" ref="VSP_033992 VSP_033993"/>
    </isoform>
</comment>
<comment type="sequence caution" evidence="3">
    <conflict type="frameshift">
        <sequence resource="EMBL-CDS" id="BAB31790"/>
    </conflict>
</comment>
<comment type="sequence caution" evidence="3">
    <conflict type="frameshift">
        <sequence resource="EMBL-CDS" id="BAC26622"/>
    </conflict>
</comment>
<evidence type="ECO:0000256" key="1">
    <source>
        <dbReference type="SAM" id="MobiDB-lite"/>
    </source>
</evidence>
<evidence type="ECO:0000303" key="2">
    <source>
    </source>
</evidence>
<evidence type="ECO:0000305" key="3"/>
<evidence type="ECO:0007744" key="4">
    <source>
    </source>
</evidence>
<organism>
    <name type="scientific">Mus musculus</name>
    <name type="common">Mouse</name>
    <dbReference type="NCBI Taxonomy" id="10090"/>
    <lineage>
        <taxon>Eukaryota</taxon>
        <taxon>Metazoa</taxon>
        <taxon>Chordata</taxon>
        <taxon>Craniata</taxon>
        <taxon>Vertebrata</taxon>
        <taxon>Euteleostomi</taxon>
        <taxon>Mammalia</taxon>
        <taxon>Eutheria</taxon>
        <taxon>Euarchontoglires</taxon>
        <taxon>Glires</taxon>
        <taxon>Rodentia</taxon>
        <taxon>Myomorpha</taxon>
        <taxon>Muroidea</taxon>
        <taxon>Muridae</taxon>
        <taxon>Murinae</taxon>
        <taxon>Mus</taxon>
        <taxon>Mus</taxon>
    </lineage>
</organism>
<accession>Q8CDN9</accession>
<accession>Q8CAD3</accession>
<accession>Q9D2J8</accession>
<name>LRRC9_MOUSE</name>
<sequence length="1456" mass="167302">MIESENLNRGEIIKELCLCNGLTYEIVGQEGSDTSKLEMFFSGYPRIVGLSLFHNLSSLTIVAQDIREISGLETCLQLKELWIAECCIEKIEGLQGCRNLEKLYLYYNKISKIENLEKLIKLEVLWLNHNMIKNIEGLQTLKNLKDLNLAGNLVSSIGRCLDPNEQLEKLNLSGNQITSFKDLTNLTKLTRLKDLCLNDPQYKSNPVCQLCNYSTHVLYHLPSLQRLDTFDVSAKQIKELADSTAMKKIMYYNMRIKTVQRHLNEELEKLNDRKCKLQKLPEERIKLFNFAKKTLERELAELKISSKGQSDTTPEAEKPRNSEVVTQESVLQQKILTKLSALDDRVTFWNKKLHEIEAIYRTEVKQKKKTHGLLTPFLLTELETVGNIHFEEGTQADDWFNSCCELILSRFCTWDFRAYGITGVKVKRVIKVNNRILRLKFEEKFQKCLDLEDTQDPDYRKMLECLFYVFDPEVTVKKKHLLQILERGFKDSDTSKPSLKKEAVTLVNSLSMCECPRIEFLQQKYKEEKKGPSESELYRHGTILIAKVFLGQSIQARDQEPINKANYPMVNSVFVPQRHVLRQRTCDCGYRQYKWFVFDHDLVLPEYIVEFEYTTVVKVHSLFSTSNNVILEEGKKYSEGLVFSQDLKFDDEVLKMEPRIKPRPKLISLDEKTIISLAKTNIYSHIVNLNLHGNSLSKLRDLAKLTGLRKLNISFNEFTCLDDVYHLYNLEYLDASHNHVITLEGFRGLMKLKHLDLSWNQLKKTGEEINVLCKHTTSLLTLDIQHNPWQKPATLRLSVIGRLKTLTHLDGLVISEEETRAALKFISGTKITQLTLLQHSSSKEERPRMLSTWPSAKILTQISKLGPHFHLTGNWYSKITALNLDGQHLFEITNLEKLENLKWASFSNNNLSKMEGLESCVNLEELTLDGNCISKIEGITRLTKLSRLSMNNNLLTGLEKHTFDNLLHLHSLSLENNRITSLSALQKTFTLIELYISNNYIAVNQEIYNLKGLCNLVILDMYGNIIIWNQENYRFFVIFHLPELKALDGVSIETSETETAKDLFGGRLTSDMIAERQGHSNFIQMQELNWTSSAIRTVDLIPVDHFRNVSNVNLQNNNLTSFSGLIYLPNVKVLCLNYNHIESIMPRLKPQTHLSSRQLLYQKVPSSGYGQQGTSKLNRDSVGSENLPPIMQSLEVLHLGYNGICNLVQLQLNRLRNLKFLFLQGNEISQVEGLDNLIVLQELVVDHNRIRAFNDTAFSKPSSLLMLHLEENRLRELSKLQSLVKLEKLFLGYNKIQDITELEKLDVIPSLRELTVYGNPICRKMVHRHVLIFRLPNLQMLDGIPINSDDRAKAEFHFSELQAKKSSIIQNNLPTSKSSLPSHLQTPLPCKFVPVTNSTDGGSFCHVKASPIKITNVLLPAGFSRFLGPDFTLTPEVEGIFTKSFRENEKTNKQQQ</sequence>
<gene>
    <name type="primary">Lrrc9</name>
</gene>